<name>LIPA_TOXGO</name>
<keyword id="KW-0004">4Fe-4S</keyword>
<keyword id="KW-0933">Apicoplast</keyword>
<keyword id="KW-0408">Iron</keyword>
<keyword id="KW-0411">Iron-sulfur</keyword>
<keyword id="KW-0479">Metal-binding</keyword>
<keyword id="KW-0934">Plastid</keyword>
<keyword id="KW-0949">S-adenosyl-L-methionine</keyword>
<keyword id="KW-0732">Signal</keyword>
<keyword id="KW-0808">Transferase</keyword>
<accession>Q86G50</accession>
<protein>
    <recommendedName>
        <fullName evidence="1">Lipoyl synthase, apicoplast</fullName>
        <ecNumber evidence="1">2.8.1.8</ecNumber>
    </recommendedName>
    <alternativeName>
        <fullName evidence="1">Lipoate synthase</fullName>
        <shortName evidence="1">LS</shortName>
        <shortName evidence="1">Lip-syn</shortName>
    </alternativeName>
    <alternativeName>
        <fullName evidence="1">Lipoic acid synthase</fullName>
    </alternativeName>
</protein>
<dbReference type="EC" id="2.8.1.8" evidence="1"/>
<dbReference type="EMBL" id="AJ556158">
    <property type="protein sequence ID" value="CAD88789.1"/>
    <property type="molecule type" value="mRNA"/>
</dbReference>
<dbReference type="SMR" id="Q86G50"/>
<dbReference type="IntAct" id="Q86G50">
    <property type="interactions" value="2"/>
</dbReference>
<dbReference type="MINT" id="Q86G50"/>
<dbReference type="VEuPathDB" id="ToxoDB:TGARI_226400A"/>
<dbReference type="VEuPathDB" id="ToxoDB:TGARI_226400B"/>
<dbReference type="VEuPathDB" id="ToxoDB:TGCAST_226400"/>
<dbReference type="VEuPathDB" id="ToxoDB:TGCOUG_226400"/>
<dbReference type="VEuPathDB" id="ToxoDB:TGDOM2_226400"/>
<dbReference type="VEuPathDB" id="ToxoDB:TGFOU_226400"/>
<dbReference type="VEuPathDB" id="ToxoDB:TGGT1_226400"/>
<dbReference type="VEuPathDB" id="ToxoDB:TGMAS_226400"/>
<dbReference type="VEuPathDB" id="ToxoDB:TGME49_226400"/>
<dbReference type="VEuPathDB" id="ToxoDB:TGP89_226400"/>
<dbReference type="VEuPathDB" id="ToxoDB:TGPRC2_226400"/>
<dbReference type="VEuPathDB" id="ToxoDB:TGRH88_045960"/>
<dbReference type="VEuPathDB" id="ToxoDB:TGRUB_226400"/>
<dbReference type="VEuPathDB" id="ToxoDB:TGVAND_226400"/>
<dbReference type="VEuPathDB" id="ToxoDB:TGVEG_226400"/>
<dbReference type="BRENDA" id="2.8.1.8">
    <property type="organism ID" value="6411"/>
</dbReference>
<dbReference type="UniPathway" id="UPA00538">
    <property type="reaction ID" value="UER00593"/>
</dbReference>
<dbReference type="GO" id="GO:0020011">
    <property type="term" value="C:apicoplast"/>
    <property type="evidence" value="ECO:0007669"/>
    <property type="project" value="UniProtKB-SubCell"/>
</dbReference>
<dbReference type="GO" id="GO:0005739">
    <property type="term" value="C:mitochondrion"/>
    <property type="evidence" value="ECO:0007669"/>
    <property type="project" value="TreeGrafter"/>
</dbReference>
<dbReference type="GO" id="GO:0051539">
    <property type="term" value="F:4 iron, 4 sulfur cluster binding"/>
    <property type="evidence" value="ECO:0007669"/>
    <property type="project" value="UniProtKB-UniRule"/>
</dbReference>
<dbReference type="GO" id="GO:0016992">
    <property type="term" value="F:lipoate synthase activity"/>
    <property type="evidence" value="ECO:0007669"/>
    <property type="project" value="UniProtKB-UniRule"/>
</dbReference>
<dbReference type="GO" id="GO:0046872">
    <property type="term" value="F:metal ion binding"/>
    <property type="evidence" value="ECO:0007669"/>
    <property type="project" value="UniProtKB-KW"/>
</dbReference>
<dbReference type="CDD" id="cd01335">
    <property type="entry name" value="Radical_SAM"/>
    <property type="match status" value="1"/>
</dbReference>
<dbReference type="Gene3D" id="3.20.20.70">
    <property type="entry name" value="Aldolase class I"/>
    <property type="match status" value="1"/>
</dbReference>
<dbReference type="HAMAP" id="MF_00206">
    <property type="entry name" value="Lipoyl_synth"/>
    <property type="match status" value="1"/>
</dbReference>
<dbReference type="InterPro" id="IPR013785">
    <property type="entry name" value="Aldolase_TIM"/>
</dbReference>
<dbReference type="InterPro" id="IPR006638">
    <property type="entry name" value="Elp3/MiaA/NifB-like_rSAM"/>
</dbReference>
<dbReference type="InterPro" id="IPR003698">
    <property type="entry name" value="Lipoyl_synth"/>
</dbReference>
<dbReference type="InterPro" id="IPR007197">
    <property type="entry name" value="rSAM"/>
</dbReference>
<dbReference type="NCBIfam" id="TIGR00510">
    <property type="entry name" value="lipA"/>
    <property type="match status" value="1"/>
</dbReference>
<dbReference type="NCBIfam" id="NF004019">
    <property type="entry name" value="PRK05481.1"/>
    <property type="match status" value="1"/>
</dbReference>
<dbReference type="NCBIfam" id="NF009544">
    <property type="entry name" value="PRK12928.1"/>
    <property type="match status" value="1"/>
</dbReference>
<dbReference type="PANTHER" id="PTHR10949">
    <property type="entry name" value="LIPOYL SYNTHASE"/>
    <property type="match status" value="1"/>
</dbReference>
<dbReference type="PANTHER" id="PTHR10949:SF0">
    <property type="entry name" value="LIPOYL SYNTHASE, MITOCHONDRIAL"/>
    <property type="match status" value="1"/>
</dbReference>
<dbReference type="Pfam" id="PF04055">
    <property type="entry name" value="Radical_SAM"/>
    <property type="match status" value="1"/>
</dbReference>
<dbReference type="SFLD" id="SFLDF00271">
    <property type="entry name" value="lipoyl_synthase"/>
    <property type="match status" value="1"/>
</dbReference>
<dbReference type="SFLD" id="SFLDS00029">
    <property type="entry name" value="Radical_SAM"/>
    <property type="match status" value="1"/>
</dbReference>
<dbReference type="SMART" id="SM00729">
    <property type="entry name" value="Elp3"/>
    <property type="match status" value="1"/>
</dbReference>
<dbReference type="SUPFAM" id="SSF102114">
    <property type="entry name" value="Radical SAM enzymes"/>
    <property type="match status" value="1"/>
</dbReference>
<dbReference type="PROSITE" id="PS51918">
    <property type="entry name" value="RADICAL_SAM"/>
    <property type="match status" value="1"/>
</dbReference>
<reference key="1">
    <citation type="journal article" date="2003" name="FEBS Lett.">
        <title>Apicomplexan parasites contain a single lipoic acid synthase located in the plastid.</title>
        <authorList>
            <person name="Thomsen-Zieger N."/>
            <person name="Schachtner J."/>
            <person name="Seeber F."/>
        </authorList>
    </citation>
    <scope>NUCLEOTIDE SEQUENCE [MRNA]</scope>
    <scope>FUNCTION</scope>
    <scope>SUBCELLULAR LOCATION</scope>
    <source>
        <strain>RH</strain>
    </source>
</reference>
<feature type="signal peptide" evidence="1">
    <location>
        <begin position="1"/>
        <end position="63"/>
    </location>
</feature>
<feature type="chain" id="PRO_0000398234" description="Lipoyl synthase, apicoplast">
    <location>
        <begin position="64"/>
        <end position="543"/>
    </location>
</feature>
<feature type="domain" description="Radical SAM core" evidence="2">
    <location>
        <begin position="264"/>
        <end position="482"/>
    </location>
</feature>
<feature type="binding site" evidence="1">
    <location>
        <position position="252"/>
    </location>
    <ligand>
        <name>[4Fe-4S] cluster</name>
        <dbReference type="ChEBI" id="CHEBI:49883"/>
        <label>1</label>
    </ligand>
</feature>
<feature type="binding site" evidence="1">
    <location>
        <position position="257"/>
    </location>
    <ligand>
        <name>[4Fe-4S] cluster</name>
        <dbReference type="ChEBI" id="CHEBI:49883"/>
        <label>1</label>
    </ligand>
</feature>
<feature type="binding site" evidence="1">
    <location>
        <position position="263"/>
    </location>
    <ligand>
        <name>[4Fe-4S] cluster</name>
        <dbReference type="ChEBI" id="CHEBI:49883"/>
        <label>1</label>
    </ligand>
</feature>
<feature type="binding site" evidence="1">
    <location>
        <position position="278"/>
    </location>
    <ligand>
        <name>[4Fe-4S] cluster</name>
        <dbReference type="ChEBI" id="CHEBI:49883"/>
        <label>2</label>
        <note>4Fe-4S-S-AdoMet</note>
    </ligand>
</feature>
<feature type="binding site" evidence="1">
    <location>
        <position position="282"/>
    </location>
    <ligand>
        <name>[4Fe-4S] cluster</name>
        <dbReference type="ChEBI" id="CHEBI:49883"/>
        <label>2</label>
        <note>4Fe-4S-S-AdoMet</note>
    </ligand>
</feature>
<feature type="binding site" evidence="1">
    <location>
        <position position="285"/>
    </location>
    <ligand>
        <name>[4Fe-4S] cluster</name>
        <dbReference type="ChEBI" id="CHEBI:49883"/>
        <label>2</label>
        <note>4Fe-4S-S-AdoMet</note>
    </ligand>
</feature>
<feature type="binding site" evidence="1">
    <location>
        <position position="493"/>
    </location>
    <ligand>
        <name>[4Fe-4S] cluster</name>
        <dbReference type="ChEBI" id="CHEBI:49883"/>
        <label>1</label>
    </ligand>
</feature>
<comment type="function">
    <text evidence="1 3">Catalyzes the radical-mediated insertion of two sulfur atoms into the C-6 and C-8 positions of the octanoyl moiety bound to the lipoyl domains of lipoate-dependent enzymes, thereby converting the octanoylated domains into lipoylated derivatives.</text>
</comment>
<comment type="catalytic activity">
    <reaction evidence="1">
        <text>[[Fe-S] cluster scaffold protein carrying a second [4Fe-4S](2+) cluster] + N(6)-octanoyl-L-lysyl-[protein] + 2 oxidized [2Fe-2S]-[ferredoxin] + 2 S-adenosyl-L-methionine + 4 H(+) = [[Fe-S] cluster scaffold protein] + N(6)-[(R)-dihydrolipoyl]-L-lysyl-[protein] + 4 Fe(3+) + 2 hydrogen sulfide + 2 5'-deoxyadenosine + 2 L-methionine + 2 reduced [2Fe-2S]-[ferredoxin]</text>
        <dbReference type="Rhea" id="RHEA:16585"/>
        <dbReference type="Rhea" id="RHEA-COMP:9928"/>
        <dbReference type="Rhea" id="RHEA-COMP:10000"/>
        <dbReference type="Rhea" id="RHEA-COMP:10001"/>
        <dbReference type="Rhea" id="RHEA-COMP:10475"/>
        <dbReference type="Rhea" id="RHEA-COMP:14568"/>
        <dbReference type="Rhea" id="RHEA-COMP:14569"/>
        <dbReference type="ChEBI" id="CHEBI:15378"/>
        <dbReference type="ChEBI" id="CHEBI:17319"/>
        <dbReference type="ChEBI" id="CHEBI:29034"/>
        <dbReference type="ChEBI" id="CHEBI:29919"/>
        <dbReference type="ChEBI" id="CHEBI:33722"/>
        <dbReference type="ChEBI" id="CHEBI:33737"/>
        <dbReference type="ChEBI" id="CHEBI:33738"/>
        <dbReference type="ChEBI" id="CHEBI:57844"/>
        <dbReference type="ChEBI" id="CHEBI:59789"/>
        <dbReference type="ChEBI" id="CHEBI:78809"/>
        <dbReference type="ChEBI" id="CHEBI:83100"/>
        <dbReference type="EC" id="2.8.1.8"/>
    </reaction>
</comment>
<comment type="cofactor">
    <cofactor evidence="1">
        <name>[4Fe-4S] cluster</name>
        <dbReference type="ChEBI" id="CHEBI:49883"/>
    </cofactor>
    <text evidence="1">Binds 2 [4Fe-4S] clusters per subunit. One cluster is coordinated with 3 cysteines and an exchangeable S-adenosyl-L-methionine.</text>
</comment>
<comment type="pathway">
    <text evidence="1">Protein modification; protein lipoylation via endogenous pathway; protein N(6)-(lipoyl)lysine from octanoyl-[acyl-carrier-protein]: step 2/2.</text>
</comment>
<comment type="subcellular location">
    <subcellularLocation>
        <location evidence="1 3">Plastid</location>
        <location evidence="1 3">Apicoplast</location>
    </subcellularLocation>
</comment>
<comment type="similarity">
    <text evidence="1">Belongs to the radical SAM superfamily. Lipoyl synthase family.</text>
</comment>
<proteinExistence type="evidence at transcript level"/>
<sequence>MAYFFDFPTDTWVEDASPGGPPKRAFGHGLAAGSSHFASPVSRRRLPTITALLLFSLLSASQSGALSVSQCSRRVSLGPLLSRVSSVSCTPSAAASALASSLYPTDSLSSVEGSVAPRPPPSSLAFVLRRVPPAAYSSSLSPSVLRFKHSLPRPLQGSLVCAPGILGGAAGSARFAGCCGSQGRSCGSGKNPELPLKGSKDEVIPRVGTSTAGPRPDWFHVPAPQAASRGAEESRYQQLQKQIRGLDLHTVCEEAKCPNIGECWNGGTATLILLGDTCTRGCRFCAIKTSSKPPPPDPLEPEKVADAVAKWDIDYVVMTSVDRDDMPDGGAGHFARTVQLVKKAKPSMLIECLVSDFQGMEESVRTLAQSGLDVYAHNIETVRRLTPYVRDKRAKYDQSLRVLHLAKQFNPSLFTKSSIMLGLGETSEEVVRTLRDLRDHDVDVVTLGQYLRPTKQQLGVVEYVTPETFKKYQDIAEEMGFKYVASGPLVRSSYKAGEYYMKHLIDDARKHGRRETVKQVKLEADVGTLKGTTTTFQVNEKEA</sequence>
<evidence type="ECO:0000255" key="1">
    <source>
        <dbReference type="HAMAP-Rule" id="MF_03123"/>
    </source>
</evidence>
<evidence type="ECO:0000255" key="2">
    <source>
        <dbReference type="PROSITE-ProRule" id="PRU01266"/>
    </source>
</evidence>
<evidence type="ECO:0000269" key="3">
    <source>
    </source>
</evidence>
<gene>
    <name evidence="1" type="primary">lipA</name>
</gene>
<organism>
    <name type="scientific">Toxoplasma gondii</name>
    <dbReference type="NCBI Taxonomy" id="5811"/>
    <lineage>
        <taxon>Eukaryota</taxon>
        <taxon>Sar</taxon>
        <taxon>Alveolata</taxon>
        <taxon>Apicomplexa</taxon>
        <taxon>Conoidasida</taxon>
        <taxon>Coccidia</taxon>
        <taxon>Eucoccidiorida</taxon>
        <taxon>Eimeriorina</taxon>
        <taxon>Sarcocystidae</taxon>
        <taxon>Toxoplasma</taxon>
    </lineage>
</organism>